<keyword id="KW-1003">Cell membrane</keyword>
<keyword id="KW-0472">Membrane</keyword>
<keyword id="KW-1185">Reference proteome</keyword>
<dbReference type="EMBL" id="BA000043">
    <property type="protein sequence ID" value="BAD77149.1"/>
    <property type="molecule type" value="Genomic_DNA"/>
</dbReference>
<dbReference type="STRING" id="235909.GK2864"/>
<dbReference type="KEGG" id="gka:GK2864"/>
<dbReference type="eggNOG" id="COG0759">
    <property type="taxonomic scope" value="Bacteria"/>
</dbReference>
<dbReference type="HOGENOM" id="CLU_144811_6_0_9"/>
<dbReference type="Proteomes" id="UP000001172">
    <property type="component" value="Chromosome"/>
</dbReference>
<dbReference type="GO" id="GO:0005886">
    <property type="term" value="C:plasma membrane"/>
    <property type="evidence" value="ECO:0007669"/>
    <property type="project" value="UniProtKB-SubCell"/>
</dbReference>
<dbReference type="HAMAP" id="MF_00386">
    <property type="entry name" value="UPF0161_YidD"/>
    <property type="match status" value="1"/>
</dbReference>
<dbReference type="InterPro" id="IPR002696">
    <property type="entry name" value="Membr_insert_effic_factor_YidD"/>
</dbReference>
<dbReference type="NCBIfam" id="TIGR00278">
    <property type="entry name" value="membrane protein insertion efficiency factor YidD"/>
    <property type="match status" value="1"/>
</dbReference>
<dbReference type="PANTHER" id="PTHR33383">
    <property type="entry name" value="MEMBRANE PROTEIN INSERTION EFFICIENCY FACTOR-RELATED"/>
    <property type="match status" value="1"/>
</dbReference>
<dbReference type="PANTHER" id="PTHR33383:SF1">
    <property type="entry name" value="MEMBRANE PROTEIN INSERTION EFFICIENCY FACTOR-RELATED"/>
    <property type="match status" value="1"/>
</dbReference>
<dbReference type="Pfam" id="PF01809">
    <property type="entry name" value="YidD"/>
    <property type="match status" value="1"/>
</dbReference>
<dbReference type="SMART" id="SM01234">
    <property type="entry name" value="Haemolytic"/>
    <property type="match status" value="1"/>
</dbReference>
<gene>
    <name type="ordered locus">GK2864</name>
</gene>
<reference key="1">
    <citation type="journal article" date="2004" name="Nucleic Acids Res.">
        <title>Thermoadaptation trait revealed by the genome sequence of thermophilic Geobacillus kaustophilus.</title>
        <authorList>
            <person name="Takami H."/>
            <person name="Takaki Y."/>
            <person name="Chee G.-J."/>
            <person name="Nishi S."/>
            <person name="Shimamura S."/>
            <person name="Suzuki H."/>
            <person name="Matsui S."/>
            <person name="Uchiyama I."/>
        </authorList>
    </citation>
    <scope>NUCLEOTIDE SEQUENCE [LARGE SCALE GENOMIC DNA]</scope>
    <source>
        <strain>HTA426</strain>
    </source>
</reference>
<organism>
    <name type="scientific">Geobacillus kaustophilus (strain HTA426)</name>
    <dbReference type="NCBI Taxonomy" id="235909"/>
    <lineage>
        <taxon>Bacteria</taxon>
        <taxon>Bacillati</taxon>
        <taxon>Bacillota</taxon>
        <taxon>Bacilli</taxon>
        <taxon>Bacillales</taxon>
        <taxon>Anoxybacillaceae</taxon>
        <taxon>Geobacillus</taxon>
        <taxon>Geobacillus thermoleovorans group</taxon>
    </lineage>
</organism>
<name>YIDD_GEOKA</name>
<proteinExistence type="inferred from homology"/>
<accession>Q5KVY7</accession>
<evidence type="ECO:0000255" key="1">
    <source>
        <dbReference type="HAMAP-Rule" id="MF_00386"/>
    </source>
</evidence>
<protein>
    <recommendedName>
        <fullName evidence="1">Putative membrane protein insertion efficiency factor</fullName>
    </recommendedName>
</protein>
<feature type="chain" id="PRO_0000253110" description="Putative membrane protein insertion efficiency factor">
    <location>
        <begin position="1"/>
        <end position="81"/>
    </location>
</feature>
<sequence>MGQWLIWCIRFYQRFLSPLKPPTCRFYPTCSNYGIEAIRRFGAIKGGWLTAKRILKCHPFHPGGFDPVPESSEHAKRNKIT</sequence>
<comment type="function">
    <text evidence="1">Could be involved in insertion of integral membrane proteins into the membrane.</text>
</comment>
<comment type="subcellular location">
    <subcellularLocation>
        <location evidence="1">Cell membrane</location>
        <topology evidence="1">Peripheral membrane protein</topology>
        <orientation evidence="1">Cytoplasmic side</orientation>
    </subcellularLocation>
</comment>
<comment type="similarity">
    <text evidence="1">Belongs to the UPF0161 family.</text>
</comment>